<reference key="1">
    <citation type="journal article" date="2004" name="Nucleic Acids Res.">
        <title>Genome sequence of Symbiobacterium thermophilum, an uncultivable bacterium that depends on microbial commensalism.</title>
        <authorList>
            <person name="Ueda K."/>
            <person name="Yamashita A."/>
            <person name="Ishikawa J."/>
            <person name="Shimada M."/>
            <person name="Watsuji T."/>
            <person name="Morimura K."/>
            <person name="Ikeda H."/>
            <person name="Hattori M."/>
            <person name="Beppu T."/>
        </authorList>
    </citation>
    <scope>NUCLEOTIDE SEQUENCE [LARGE SCALE GENOMIC DNA]</scope>
    <source>
        <strain>DSM 24528 / JCM 14929 / IAM 14863 / T</strain>
    </source>
</reference>
<protein>
    <recommendedName>
        <fullName evidence="1">2-C-methyl-D-erythritol 2,4-cyclodiphosphate synthase</fullName>
        <shortName evidence="1">MECDP-synthase</shortName>
        <shortName evidence="1">MECPP-synthase</shortName>
        <shortName evidence="1">MECPS</shortName>
        <ecNumber evidence="1">4.6.1.12</ecNumber>
    </recommendedName>
</protein>
<organism>
    <name type="scientific">Symbiobacterium thermophilum (strain DSM 24528 / JCM 14929 / IAM 14863 / T)</name>
    <dbReference type="NCBI Taxonomy" id="292459"/>
    <lineage>
        <taxon>Bacteria</taxon>
        <taxon>Bacillati</taxon>
        <taxon>Bacillota</taxon>
        <taxon>Clostridia</taxon>
        <taxon>Eubacteriales</taxon>
        <taxon>Symbiobacteriaceae</taxon>
        <taxon>Symbiobacterium</taxon>
    </lineage>
</organism>
<name>ISPF_SYMTH</name>
<accession>Q67JP6</accession>
<comment type="function">
    <text evidence="1">Involved in the biosynthesis of isopentenyl diphosphate (IPP) and dimethylallyl diphosphate (DMAPP), two major building blocks of isoprenoid compounds. Catalyzes the conversion of 4-diphosphocytidyl-2-C-methyl-D-erythritol 2-phosphate (CDP-ME2P) to 2-C-methyl-D-erythritol 2,4-cyclodiphosphate (ME-CPP) with a corresponding release of cytidine 5-monophosphate (CMP).</text>
</comment>
<comment type="catalytic activity">
    <reaction evidence="1">
        <text>4-CDP-2-C-methyl-D-erythritol 2-phosphate = 2-C-methyl-D-erythritol 2,4-cyclic diphosphate + CMP</text>
        <dbReference type="Rhea" id="RHEA:23864"/>
        <dbReference type="ChEBI" id="CHEBI:57919"/>
        <dbReference type="ChEBI" id="CHEBI:58483"/>
        <dbReference type="ChEBI" id="CHEBI:60377"/>
        <dbReference type="EC" id="4.6.1.12"/>
    </reaction>
</comment>
<comment type="cofactor">
    <cofactor evidence="1">
        <name>a divalent metal cation</name>
        <dbReference type="ChEBI" id="CHEBI:60240"/>
    </cofactor>
    <text evidence="1">Binds 1 divalent metal cation per subunit.</text>
</comment>
<comment type="pathway">
    <text evidence="1">Isoprenoid biosynthesis; isopentenyl diphosphate biosynthesis via DXP pathway; isopentenyl diphosphate from 1-deoxy-D-xylulose 5-phosphate: step 4/6.</text>
</comment>
<comment type="subunit">
    <text evidence="1">Homotrimer.</text>
</comment>
<comment type="similarity">
    <text evidence="1">Belongs to the IspF family.</text>
</comment>
<evidence type="ECO:0000255" key="1">
    <source>
        <dbReference type="HAMAP-Rule" id="MF_00107"/>
    </source>
</evidence>
<feature type="chain" id="PRO_0000189506" description="2-C-methyl-D-erythritol 2,4-cyclodiphosphate synthase">
    <location>
        <begin position="1"/>
        <end position="157"/>
    </location>
</feature>
<feature type="binding site" evidence="1">
    <location>
        <begin position="8"/>
        <end position="10"/>
    </location>
    <ligand>
        <name>4-CDP-2-C-methyl-D-erythritol 2-phosphate</name>
        <dbReference type="ChEBI" id="CHEBI:57919"/>
    </ligand>
</feature>
<feature type="binding site" evidence="1">
    <location>
        <position position="8"/>
    </location>
    <ligand>
        <name>a divalent metal cation</name>
        <dbReference type="ChEBI" id="CHEBI:60240"/>
    </ligand>
</feature>
<feature type="binding site" evidence="1">
    <location>
        <position position="10"/>
    </location>
    <ligand>
        <name>a divalent metal cation</name>
        <dbReference type="ChEBI" id="CHEBI:60240"/>
    </ligand>
</feature>
<feature type="binding site" evidence="1">
    <location>
        <begin position="34"/>
        <end position="35"/>
    </location>
    <ligand>
        <name>4-CDP-2-C-methyl-D-erythritol 2-phosphate</name>
        <dbReference type="ChEBI" id="CHEBI:57919"/>
    </ligand>
</feature>
<feature type="binding site" evidence="1">
    <location>
        <position position="42"/>
    </location>
    <ligand>
        <name>a divalent metal cation</name>
        <dbReference type="ChEBI" id="CHEBI:60240"/>
    </ligand>
</feature>
<feature type="binding site" evidence="1">
    <location>
        <begin position="56"/>
        <end position="58"/>
    </location>
    <ligand>
        <name>4-CDP-2-C-methyl-D-erythritol 2-phosphate</name>
        <dbReference type="ChEBI" id="CHEBI:57919"/>
    </ligand>
</feature>
<feature type="binding site" evidence="1">
    <location>
        <begin position="132"/>
        <end position="135"/>
    </location>
    <ligand>
        <name>4-CDP-2-C-methyl-D-erythritol 2-phosphate</name>
        <dbReference type="ChEBI" id="CHEBI:57919"/>
    </ligand>
</feature>
<feature type="binding site" evidence="1">
    <location>
        <position position="139"/>
    </location>
    <ligand>
        <name>4-CDP-2-C-methyl-D-erythritol 2-phosphate</name>
        <dbReference type="ChEBI" id="CHEBI:57919"/>
    </ligand>
</feature>
<feature type="binding site" evidence="1">
    <location>
        <position position="142"/>
    </location>
    <ligand>
        <name>4-CDP-2-C-methyl-D-erythritol 2-phosphate</name>
        <dbReference type="ChEBI" id="CHEBI:57919"/>
    </ligand>
</feature>
<feature type="site" description="Transition state stabilizer" evidence="1">
    <location>
        <position position="34"/>
    </location>
</feature>
<feature type="site" description="Transition state stabilizer" evidence="1">
    <location>
        <position position="133"/>
    </location>
</feature>
<gene>
    <name evidence="1" type="primary">ispF</name>
    <name type="ordered locus">STH3122</name>
</gene>
<keyword id="KW-0414">Isoprene biosynthesis</keyword>
<keyword id="KW-0456">Lyase</keyword>
<keyword id="KW-0479">Metal-binding</keyword>
<keyword id="KW-1185">Reference proteome</keyword>
<sequence>MLIGFGYDVHRLVPGRPLVLGGVEIPSKRGLEGHSDADVALHALMDALLGAAGLGDIGTHFPPTDPAWAGANSLDLLRRVVGLLAEEGYRPVNCDITVVAERPKIGPYVPAMRERIGAVLGVEPRRVSIKATTNEQMGFVGREEGIAAYAVALIAGR</sequence>
<dbReference type="EC" id="4.6.1.12" evidence="1"/>
<dbReference type="EMBL" id="AP006840">
    <property type="protein sequence ID" value="BAD42104.1"/>
    <property type="molecule type" value="Genomic_DNA"/>
</dbReference>
<dbReference type="RefSeq" id="WP_011197235.1">
    <property type="nucleotide sequence ID" value="NC_006177.1"/>
</dbReference>
<dbReference type="SMR" id="Q67JP6"/>
<dbReference type="STRING" id="292459.STH3122"/>
<dbReference type="KEGG" id="sth:STH3122"/>
<dbReference type="eggNOG" id="COG0245">
    <property type="taxonomic scope" value="Bacteria"/>
</dbReference>
<dbReference type="HOGENOM" id="CLU_084630_2_0_9"/>
<dbReference type="OrthoDB" id="9804336at2"/>
<dbReference type="UniPathway" id="UPA00056">
    <property type="reaction ID" value="UER00095"/>
</dbReference>
<dbReference type="Proteomes" id="UP000000417">
    <property type="component" value="Chromosome"/>
</dbReference>
<dbReference type="GO" id="GO:0008685">
    <property type="term" value="F:2-C-methyl-D-erythritol 2,4-cyclodiphosphate synthase activity"/>
    <property type="evidence" value="ECO:0007669"/>
    <property type="project" value="UniProtKB-UniRule"/>
</dbReference>
<dbReference type="GO" id="GO:0046872">
    <property type="term" value="F:metal ion binding"/>
    <property type="evidence" value="ECO:0007669"/>
    <property type="project" value="UniProtKB-KW"/>
</dbReference>
<dbReference type="GO" id="GO:0019288">
    <property type="term" value="P:isopentenyl diphosphate biosynthetic process, methylerythritol 4-phosphate pathway"/>
    <property type="evidence" value="ECO:0007669"/>
    <property type="project" value="UniProtKB-UniRule"/>
</dbReference>
<dbReference type="GO" id="GO:0016114">
    <property type="term" value="P:terpenoid biosynthetic process"/>
    <property type="evidence" value="ECO:0007669"/>
    <property type="project" value="InterPro"/>
</dbReference>
<dbReference type="CDD" id="cd00554">
    <property type="entry name" value="MECDP_synthase"/>
    <property type="match status" value="1"/>
</dbReference>
<dbReference type="FunFam" id="3.30.1330.50:FF:000003">
    <property type="entry name" value="2-C-methyl-D-erythritol 2,4-cyclodiphosphate synthase"/>
    <property type="match status" value="1"/>
</dbReference>
<dbReference type="Gene3D" id="3.30.1330.50">
    <property type="entry name" value="2-C-methyl-D-erythritol 2,4-cyclodiphosphate synthase"/>
    <property type="match status" value="1"/>
</dbReference>
<dbReference type="HAMAP" id="MF_00107">
    <property type="entry name" value="IspF"/>
    <property type="match status" value="1"/>
</dbReference>
<dbReference type="InterPro" id="IPR003526">
    <property type="entry name" value="MECDP_synthase"/>
</dbReference>
<dbReference type="InterPro" id="IPR020555">
    <property type="entry name" value="MECDP_synthase_CS"/>
</dbReference>
<dbReference type="InterPro" id="IPR036571">
    <property type="entry name" value="MECDP_synthase_sf"/>
</dbReference>
<dbReference type="NCBIfam" id="TIGR00151">
    <property type="entry name" value="ispF"/>
    <property type="match status" value="1"/>
</dbReference>
<dbReference type="PANTHER" id="PTHR43181">
    <property type="entry name" value="2-C-METHYL-D-ERYTHRITOL 2,4-CYCLODIPHOSPHATE SYNTHASE, CHLOROPLASTIC"/>
    <property type="match status" value="1"/>
</dbReference>
<dbReference type="PANTHER" id="PTHR43181:SF1">
    <property type="entry name" value="2-C-METHYL-D-ERYTHRITOL 2,4-CYCLODIPHOSPHATE SYNTHASE, CHLOROPLASTIC"/>
    <property type="match status" value="1"/>
</dbReference>
<dbReference type="Pfam" id="PF02542">
    <property type="entry name" value="YgbB"/>
    <property type="match status" value="1"/>
</dbReference>
<dbReference type="SUPFAM" id="SSF69765">
    <property type="entry name" value="IpsF-like"/>
    <property type="match status" value="1"/>
</dbReference>
<dbReference type="PROSITE" id="PS01350">
    <property type="entry name" value="ISPF"/>
    <property type="match status" value="1"/>
</dbReference>
<proteinExistence type="inferred from homology"/>